<name>MCHL1_PANPA</name>
<feature type="chain" id="PRO_0000158270" description="Pro-MCH variant">
    <location>
        <begin position="1" status="less than"/>
        <end position="62" status="greater than"/>
    </location>
</feature>
<feature type="region of interest" description="NGE-like">
    <location>
        <begin position="23"/>
        <end position="41"/>
    </location>
</feature>
<feature type="region of interest" description="Disordered" evidence="1">
    <location>
        <begin position="29"/>
        <end position="62"/>
    </location>
</feature>
<feature type="region of interest" description="NEI-like">
    <location>
        <begin position="44"/>
        <end position="56"/>
    </location>
</feature>
<feature type="region of interest" description="Melanin-concentrating hormone-like">
    <location>
        <begin position="60"/>
        <end position="62" status="greater than"/>
    </location>
</feature>
<feature type="non-terminal residue">
    <location>
        <position position="1"/>
    </location>
</feature>
<feature type="non-terminal residue">
    <location>
        <position position="62"/>
    </location>
</feature>
<gene>
    <name type="primary">PMCHL1</name>
</gene>
<reference key="1">
    <citation type="journal article" date="1998" name="Mol. Biol. Evol.">
        <title>Emergence of a brain-expressed variant melanin-concentrating hormone gene during higher primate evolution: a gene 'in search of a function'.</title>
        <authorList>
            <person name="Viale A."/>
            <person name="Ortola C."/>
            <person name="Richard F."/>
            <person name="Vernier P."/>
            <person name="Presse F."/>
            <person name="Schilling S."/>
            <person name="Dutrillaux B."/>
            <person name="Nahon J.-L."/>
        </authorList>
    </citation>
    <scope>NUCLEOTIDE SEQUENCE [GENOMIC DNA]</scope>
</reference>
<protein>
    <recommendedName>
        <fullName>Pro-MCH variant</fullName>
    </recommendedName>
</protein>
<sequence>KHNFLNHGLSLNLVIKPYLALEGSVAFPAENGVQDTESTQEKRETGDEENSAKFPIGRRDFD</sequence>
<organism>
    <name type="scientific">Pan paniscus</name>
    <name type="common">Pygmy chimpanzee</name>
    <name type="synonym">Bonobo</name>
    <dbReference type="NCBI Taxonomy" id="9597"/>
    <lineage>
        <taxon>Eukaryota</taxon>
        <taxon>Metazoa</taxon>
        <taxon>Chordata</taxon>
        <taxon>Craniata</taxon>
        <taxon>Vertebrata</taxon>
        <taxon>Euteleostomi</taxon>
        <taxon>Mammalia</taxon>
        <taxon>Eutheria</taxon>
        <taxon>Euarchontoglires</taxon>
        <taxon>Primates</taxon>
        <taxon>Haplorrhini</taxon>
        <taxon>Catarrhini</taxon>
        <taxon>Hominidae</taxon>
        <taxon>Pan</taxon>
    </lineage>
</organism>
<keyword id="KW-1185">Reference proteome</keyword>
<dbReference type="EMBL" id="AF029400">
    <property type="protein sequence ID" value="AAC05253.1"/>
    <property type="molecule type" value="Genomic_DNA"/>
</dbReference>
<dbReference type="Proteomes" id="UP000240080">
    <property type="component" value="Unplaced"/>
</dbReference>
<dbReference type="GO" id="GO:0045202">
    <property type="term" value="C:synapse"/>
    <property type="evidence" value="ECO:0007669"/>
    <property type="project" value="GOC"/>
</dbReference>
<dbReference type="GO" id="GO:0030354">
    <property type="term" value="F:melanin-concentrating hormone activity"/>
    <property type="evidence" value="ECO:0007669"/>
    <property type="project" value="InterPro"/>
</dbReference>
<dbReference type="GO" id="GO:0031777">
    <property type="term" value="F:type 1 melanin-concentrating hormone receptor binding"/>
    <property type="evidence" value="ECO:0007669"/>
    <property type="project" value="TreeGrafter"/>
</dbReference>
<dbReference type="GO" id="GO:0007268">
    <property type="term" value="P:chemical synaptic transmission"/>
    <property type="evidence" value="ECO:0007669"/>
    <property type="project" value="InterPro"/>
</dbReference>
<dbReference type="InterPro" id="IPR005456">
    <property type="entry name" value="Prepro-melanin_conc_hormone"/>
</dbReference>
<dbReference type="PANTHER" id="PTHR12091">
    <property type="entry name" value="MELANIN-CONCENTRATING HORMONE"/>
    <property type="match status" value="1"/>
</dbReference>
<dbReference type="PANTHER" id="PTHR12091:SF1">
    <property type="entry name" value="PRO-MCH-LIKE PROTEIN 1-RELATED"/>
    <property type="match status" value="1"/>
</dbReference>
<dbReference type="Pfam" id="PF05824">
    <property type="entry name" value="Pro-MCH"/>
    <property type="match status" value="1"/>
</dbReference>
<dbReference type="PRINTS" id="PR01641">
    <property type="entry name" value="PROMCHFAMILY"/>
</dbReference>
<comment type="similarity">
    <text evidence="2">Belongs to the melanin-concentrating hormone family.</text>
</comment>
<comment type="caution">
    <text evidence="2">PMCHL1 mRNA may not be used as template for translation. In human only antisense PMCHL1 transcripts are present in brain.</text>
</comment>
<proteinExistence type="inferred from homology"/>
<accession>O62692</accession>
<evidence type="ECO:0000256" key="1">
    <source>
        <dbReference type="SAM" id="MobiDB-lite"/>
    </source>
</evidence>
<evidence type="ECO:0000305" key="2"/>